<feature type="chain" id="PRO_0000352968" description="Threonylcarbamoyl-AMP synthase">
    <location>
        <begin position="1"/>
        <end position="190"/>
    </location>
</feature>
<feature type="domain" description="YrdC-like" evidence="1">
    <location>
        <begin position="7"/>
        <end position="190"/>
    </location>
</feature>
<gene>
    <name evidence="1" type="primary">tsaC</name>
    <name type="synonym">rimN</name>
    <name type="ordered locus">SCH_3338</name>
</gene>
<dbReference type="EC" id="2.7.7.87" evidence="1"/>
<dbReference type="EMBL" id="AE017220">
    <property type="protein sequence ID" value="AAX67244.1"/>
    <property type="status" value="ALT_INIT"/>
    <property type="molecule type" value="Genomic_DNA"/>
</dbReference>
<dbReference type="RefSeq" id="WP_001063613.1">
    <property type="nucleotide sequence ID" value="NC_006905.1"/>
</dbReference>
<dbReference type="SMR" id="Q57J68"/>
<dbReference type="KEGG" id="sec:SCH_3338"/>
<dbReference type="HOGENOM" id="CLU_031397_6_0_6"/>
<dbReference type="Proteomes" id="UP000000538">
    <property type="component" value="Chromosome"/>
</dbReference>
<dbReference type="GO" id="GO:0005737">
    <property type="term" value="C:cytoplasm"/>
    <property type="evidence" value="ECO:0007669"/>
    <property type="project" value="UniProtKB-SubCell"/>
</dbReference>
<dbReference type="GO" id="GO:0005524">
    <property type="term" value="F:ATP binding"/>
    <property type="evidence" value="ECO:0007669"/>
    <property type="project" value="UniProtKB-UniRule"/>
</dbReference>
<dbReference type="GO" id="GO:0003725">
    <property type="term" value="F:double-stranded RNA binding"/>
    <property type="evidence" value="ECO:0007669"/>
    <property type="project" value="InterPro"/>
</dbReference>
<dbReference type="GO" id="GO:0061710">
    <property type="term" value="F:L-threonylcarbamoyladenylate synthase"/>
    <property type="evidence" value="ECO:0007669"/>
    <property type="project" value="UniProtKB-EC"/>
</dbReference>
<dbReference type="GO" id="GO:0000049">
    <property type="term" value="F:tRNA binding"/>
    <property type="evidence" value="ECO:0007669"/>
    <property type="project" value="TreeGrafter"/>
</dbReference>
<dbReference type="GO" id="GO:0006450">
    <property type="term" value="P:regulation of translational fidelity"/>
    <property type="evidence" value="ECO:0007669"/>
    <property type="project" value="TreeGrafter"/>
</dbReference>
<dbReference type="GO" id="GO:0002949">
    <property type="term" value="P:tRNA threonylcarbamoyladenosine modification"/>
    <property type="evidence" value="ECO:0007669"/>
    <property type="project" value="UniProtKB-UniRule"/>
</dbReference>
<dbReference type="FunFam" id="3.90.870.10:FF:000004">
    <property type="entry name" value="Threonylcarbamoyl-AMP synthase"/>
    <property type="match status" value="1"/>
</dbReference>
<dbReference type="Gene3D" id="3.90.870.10">
    <property type="entry name" value="DHBP synthase"/>
    <property type="match status" value="1"/>
</dbReference>
<dbReference type="HAMAP" id="MF_01852">
    <property type="entry name" value="TsaC"/>
    <property type="match status" value="1"/>
</dbReference>
<dbReference type="InterPro" id="IPR017945">
    <property type="entry name" value="DHBP_synth_RibB-like_a/b_dom"/>
</dbReference>
<dbReference type="InterPro" id="IPR006070">
    <property type="entry name" value="Sua5-like_dom"/>
</dbReference>
<dbReference type="InterPro" id="IPR023535">
    <property type="entry name" value="TC-AMP_synthase"/>
</dbReference>
<dbReference type="InterPro" id="IPR050156">
    <property type="entry name" value="TC-AMP_synthase_SUA5"/>
</dbReference>
<dbReference type="NCBIfam" id="NF007919">
    <property type="entry name" value="PRK10634.1"/>
    <property type="match status" value="1"/>
</dbReference>
<dbReference type="PANTHER" id="PTHR17490">
    <property type="entry name" value="SUA5"/>
    <property type="match status" value="1"/>
</dbReference>
<dbReference type="PANTHER" id="PTHR17490:SF18">
    <property type="entry name" value="THREONYLCARBAMOYL-AMP SYNTHASE"/>
    <property type="match status" value="1"/>
</dbReference>
<dbReference type="Pfam" id="PF01300">
    <property type="entry name" value="Sua5_yciO_yrdC"/>
    <property type="match status" value="1"/>
</dbReference>
<dbReference type="SUPFAM" id="SSF55821">
    <property type="entry name" value="YrdC/RibB"/>
    <property type="match status" value="1"/>
</dbReference>
<dbReference type="PROSITE" id="PS51163">
    <property type="entry name" value="YRDC"/>
    <property type="match status" value="1"/>
</dbReference>
<accession>Q57J68</accession>
<protein>
    <recommendedName>
        <fullName evidence="1">Threonylcarbamoyl-AMP synthase</fullName>
        <shortName evidence="1">TC-AMP synthase</shortName>
        <ecNumber evidence="1">2.7.7.87</ecNumber>
    </recommendedName>
    <alternativeName>
        <fullName evidence="1">L-threonylcarbamoyladenylate synthase</fullName>
    </alternativeName>
    <alternativeName>
        <fullName evidence="1">t(6)A37 threonylcarbamoyladenosine biosynthesis protein TsaC</fullName>
    </alternativeName>
    <alternativeName>
        <fullName evidence="1">tRNA threonylcarbamoyladenosine biosynthesis protein TsaC</fullName>
    </alternativeName>
</protein>
<evidence type="ECO:0000255" key="1">
    <source>
        <dbReference type="HAMAP-Rule" id="MF_01852"/>
    </source>
</evidence>
<evidence type="ECO:0000305" key="2"/>
<name>TSAC_SALCH</name>
<sequence>MNNNLPTGSIAAAVDLLNKENVIAYPTEAVFGVGCDPDSETAVTRLLALKQRPVDKGLILIAASFEQLKPYIDDSILTAAQRKAVFDCWPGPVTFVFPAPATTPRWLTGRFDSLAVRVTNHPLVVALCNAYGKPLVSTSANLSGLPPCRTVEEVRAQFGDDFPVVEGATGGRLNPSEIRDALTGELFRQG</sequence>
<reference key="1">
    <citation type="journal article" date="2005" name="Nucleic Acids Res.">
        <title>The genome sequence of Salmonella enterica serovar Choleraesuis, a highly invasive and resistant zoonotic pathogen.</title>
        <authorList>
            <person name="Chiu C.-H."/>
            <person name="Tang P."/>
            <person name="Chu C."/>
            <person name="Hu S."/>
            <person name="Bao Q."/>
            <person name="Yu J."/>
            <person name="Chou Y.-Y."/>
            <person name="Wang H.-S."/>
            <person name="Lee Y.-S."/>
        </authorList>
    </citation>
    <scope>NUCLEOTIDE SEQUENCE [LARGE SCALE GENOMIC DNA]</scope>
    <source>
        <strain>SC-B67</strain>
    </source>
</reference>
<proteinExistence type="inferred from homology"/>
<comment type="function">
    <text evidence="1">Required for the formation of a threonylcarbamoyl group on adenosine at position 37 (t(6)A37) in tRNAs that read codons beginning with adenine. Catalyzes the conversion of L-threonine, HCO(3)(-)/CO(2) and ATP to give threonylcarbamoyl-AMP (TC-AMP) as the acyladenylate intermediate, with the release of diphosphate.</text>
</comment>
<comment type="catalytic activity">
    <reaction evidence="1">
        <text>L-threonine + hydrogencarbonate + ATP = L-threonylcarbamoyladenylate + diphosphate + H2O</text>
        <dbReference type="Rhea" id="RHEA:36407"/>
        <dbReference type="ChEBI" id="CHEBI:15377"/>
        <dbReference type="ChEBI" id="CHEBI:17544"/>
        <dbReference type="ChEBI" id="CHEBI:30616"/>
        <dbReference type="ChEBI" id="CHEBI:33019"/>
        <dbReference type="ChEBI" id="CHEBI:57926"/>
        <dbReference type="ChEBI" id="CHEBI:73682"/>
        <dbReference type="EC" id="2.7.7.87"/>
    </reaction>
</comment>
<comment type="subcellular location">
    <subcellularLocation>
        <location evidence="1">Cytoplasm</location>
    </subcellularLocation>
</comment>
<comment type="similarity">
    <text evidence="1">Belongs to the SUA5 family. TsaC subfamily.</text>
</comment>
<comment type="sequence caution" evidence="2">
    <conflict type="erroneous initiation">
        <sequence resource="EMBL-CDS" id="AAX67244"/>
    </conflict>
</comment>
<organism>
    <name type="scientific">Salmonella choleraesuis (strain SC-B67)</name>
    <dbReference type="NCBI Taxonomy" id="321314"/>
    <lineage>
        <taxon>Bacteria</taxon>
        <taxon>Pseudomonadati</taxon>
        <taxon>Pseudomonadota</taxon>
        <taxon>Gammaproteobacteria</taxon>
        <taxon>Enterobacterales</taxon>
        <taxon>Enterobacteriaceae</taxon>
        <taxon>Salmonella</taxon>
    </lineage>
</organism>
<keyword id="KW-0067">ATP-binding</keyword>
<keyword id="KW-0963">Cytoplasm</keyword>
<keyword id="KW-0547">Nucleotide-binding</keyword>
<keyword id="KW-0548">Nucleotidyltransferase</keyword>
<keyword id="KW-0808">Transferase</keyword>
<keyword id="KW-0819">tRNA processing</keyword>